<name>RS15_LARHH</name>
<sequence length="89" mass="10218">MAISTELKAEIVKDYQRAEGDTGSPEVQVALLTARINDLTPHFKANTKDHHSRRGLLKMVSRRRKLLDYLKRTDAEAYRALITRLGLRK</sequence>
<feature type="chain" id="PRO_1000166424" description="Small ribosomal subunit protein uS15">
    <location>
        <begin position="1"/>
        <end position="89"/>
    </location>
</feature>
<accession>C1D8W9</accession>
<gene>
    <name evidence="1" type="primary">rpsO</name>
    <name type="ordered locus">LHK_01925</name>
</gene>
<evidence type="ECO:0000255" key="1">
    <source>
        <dbReference type="HAMAP-Rule" id="MF_01343"/>
    </source>
</evidence>
<evidence type="ECO:0000305" key="2"/>
<dbReference type="EMBL" id="CP001154">
    <property type="protein sequence ID" value="ACO74909.1"/>
    <property type="molecule type" value="Genomic_DNA"/>
</dbReference>
<dbReference type="RefSeq" id="WP_012697395.1">
    <property type="nucleotide sequence ID" value="NC_012559.1"/>
</dbReference>
<dbReference type="SMR" id="C1D8W9"/>
<dbReference type="STRING" id="557598.LHK_01925"/>
<dbReference type="GeneID" id="75108701"/>
<dbReference type="KEGG" id="lhk:LHK_01925"/>
<dbReference type="eggNOG" id="COG0184">
    <property type="taxonomic scope" value="Bacteria"/>
</dbReference>
<dbReference type="HOGENOM" id="CLU_148518_0_0_4"/>
<dbReference type="Proteomes" id="UP000002010">
    <property type="component" value="Chromosome"/>
</dbReference>
<dbReference type="GO" id="GO:0022627">
    <property type="term" value="C:cytosolic small ribosomal subunit"/>
    <property type="evidence" value="ECO:0007669"/>
    <property type="project" value="TreeGrafter"/>
</dbReference>
<dbReference type="GO" id="GO:0019843">
    <property type="term" value="F:rRNA binding"/>
    <property type="evidence" value="ECO:0007669"/>
    <property type="project" value="UniProtKB-UniRule"/>
</dbReference>
<dbReference type="GO" id="GO:0003735">
    <property type="term" value="F:structural constituent of ribosome"/>
    <property type="evidence" value="ECO:0007669"/>
    <property type="project" value="InterPro"/>
</dbReference>
<dbReference type="GO" id="GO:0006412">
    <property type="term" value="P:translation"/>
    <property type="evidence" value="ECO:0007669"/>
    <property type="project" value="UniProtKB-UniRule"/>
</dbReference>
<dbReference type="CDD" id="cd00353">
    <property type="entry name" value="Ribosomal_S15p_S13e"/>
    <property type="match status" value="1"/>
</dbReference>
<dbReference type="FunFam" id="1.10.287.10:FF:000002">
    <property type="entry name" value="30S ribosomal protein S15"/>
    <property type="match status" value="1"/>
</dbReference>
<dbReference type="Gene3D" id="6.10.250.3130">
    <property type="match status" value="1"/>
</dbReference>
<dbReference type="Gene3D" id="1.10.287.10">
    <property type="entry name" value="S15/NS1, RNA-binding"/>
    <property type="match status" value="1"/>
</dbReference>
<dbReference type="HAMAP" id="MF_01343_B">
    <property type="entry name" value="Ribosomal_uS15_B"/>
    <property type="match status" value="1"/>
</dbReference>
<dbReference type="InterPro" id="IPR000589">
    <property type="entry name" value="Ribosomal_uS15"/>
</dbReference>
<dbReference type="InterPro" id="IPR005290">
    <property type="entry name" value="Ribosomal_uS15_bac-type"/>
</dbReference>
<dbReference type="InterPro" id="IPR009068">
    <property type="entry name" value="uS15_NS1_RNA-bd_sf"/>
</dbReference>
<dbReference type="NCBIfam" id="TIGR00952">
    <property type="entry name" value="S15_bact"/>
    <property type="match status" value="1"/>
</dbReference>
<dbReference type="PANTHER" id="PTHR23321">
    <property type="entry name" value="RIBOSOMAL PROTEIN S15, BACTERIAL AND ORGANELLAR"/>
    <property type="match status" value="1"/>
</dbReference>
<dbReference type="PANTHER" id="PTHR23321:SF26">
    <property type="entry name" value="SMALL RIBOSOMAL SUBUNIT PROTEIN US15M"/>
    <property type="match status" value="1"/>
</dbReference>
<dbReference type="Pfam" id="PF00312">
    <property type="entry name" value="Ribosomal_S15"/>
    <property type="match status" value="1"/>
</dbReference>
<dbReference type="SMART" id="SM01387">
    <property type="entry name" value="Ribosomal_S15"/>
    <property type="match status" value="1"/>
</dbReference>
<dbReference type="SUPFAM" id="SSF47060">
    <property type="entry name" value="S15/NS1 RNA-binding domain"/>
    <property type="match status" value="1"/>
</dbReference>
<dbReference type="PROSITE" id="PS00362">
    <property type="entry name" value="RIBOSOMAL_S15"/>
    <property type="match status" value="1"/>
</dbReference>
<comment type="function">
    <text evidence="1">One of the primary rRNA binding proteins, it binds directly to 16S rRNA where it helps nucleate assembly of the platform of the 30S subunit by binding and bridging several RNA helices of the 16S rRNA.</text>
</comment>
<comment type="function">
    <text evidence="1">Forms an intersubunit bridge (bridge B4) with the 23S rRNA of the 50S subunit in the ribosome.</text>
</comment>
<comment type="subunit">
    <text evidence="1">Part of the 30S ribosomal subunit. Forms a bridge to the 50S subunit in the 70S ribosome, contacting the 23S rRNA.</text>
</comment>
<comment type="similarity">
    <text evidence="1">Belongs to the universal ribosomal protein uS15 family.</text>
</comment>
<reference key="1">
    <citation type="journal article" date="2009" name="PLoS Genet.">
        <title>The complete genome and proteome of Laribacter hongkongensis reveal potential mechanisms for adaptations to different temperatures and habitats.</title>
        <authorList>
            <person name="Woo P.C.Y."/>
            <person name="Lau S.K.P."/>
            <person name="Tse H."/>
            <person name="Teng J.L.L."/>
            <person name="Curreem S.O."/>
            <person name="Tsang A.K.L."/>
            <person name="Fan R.Y.Y."/>
            <person name="Wong G.K.M."/>
            <person name="Huang Y."/>
            <person name="Loman N.J."/>
            <person name="Snyder L.A.S."/>
            <person name="Cai J.J."/>
            <person name="Huang J.-D."/>
            <person name="Mak W."/>
            <person name="Pallen M.J."/>
            <person name="Lok S."/>
            <person name="Yuen K.-Y."/>
        </authorList>
    </citation>
    <scope>NUCLEOTIDE SEQUENCE [LARGE SCALE GENOMIC DNA]</scope>
    <source>
        <strain>HLHK9</strain>
    </source>
</reference>
<protein>
    <recommendedName>
        <fullName evidence="1">Small ribosomal subunit protein uS15</fullName>
    </recommendedName>
    <alternativeName>
        <fullName evidence="2">30S ribosomal protein S15</fullName>
    </alternativeName>
</protein>
<organism>
    <name type="scientific">Laribacter hongkongensis (strain HLHK9)</name>
    <dbReference type="NCBI Taxonomy" id="557598"/>
    <lineage>
        <taxon>Bacteria</taxon>
        <taxon>Pseudomonadati</taxon>
        <taxon>Pseudomonadota</taxon>
        <taxon>Betaproteobacteria</taxon>
        <taxon>Neisseriales</taxon>
        <taxon>Aquaspirillaceae</taxon>
        <taxon>Laribacter</taxon>
    </lineage>
</organism>
<keyword id="KW-1185">Reference proteome</keyword>
<keyword id="KW-0687">Ribonucleoprotein</keyword>
<keyword id="KW-0689">Ribosomal protein</keyword>
<keyword id="KW-0694">RNA-binding</keyword>
<keyword id="KW-0699">rRNA-binding</keyword>
<proteinExistence type="inferred from homology"/>